<comment type="subcellular location">
    <subcellularLocation>
        <location evidence="2 3 11">Mitochondrion</location>
    </subcellularLocation>
    <subcellularLocation>
        <location evidence="2 11">Mitochondrion membrane</location>
        <topology evidence="1">Single-pass membrane protein</topology>
    </subcellularLocation>
    <subcellularLocation>
        <location evidence="3">Endoplasmic reticulum</location>
    </subcellularLocation>
    <subcellularLocation>
        <location evidence="11">Cytoplasm</location>
        <location evidence="11">Cytosol</location>
    </subcellularLocation>
    <text evidence="11">In response to oxidative stress, relocates to the cytosol forming aggregates that partially co-localize with mitochondria.</text>
</comment>
<comment type="alternative products">
    <event type="alternative splicing"/>
    <isoform>
        <id>Q9NSK7-4</id>
        <name>1</name>
        <sequence type="displayed"/>
    </isoform>
    <isoform>
        <id>Q9NSK7-1</id>
        <name>4</name>
        <sequence type="described" ref="VSP_062333"/>
    </isoform>
    <isoform>
        <id>Q9NSK7-2</id>
        <name>2</name>
        <sequence type="described" ref="VSP_062332"/>
    </isoform>
    <isoform>
        <id>Q9NSK7-3</id>
        <name>3</name>
        <sequence type="described" ref="VSP_062334 VSP_062335"/>
    </isoform>
</comment>
<comment type="induction">
    <text evidence="2">Up-regulated during adipocyte differentiation in an in vitro preadipocyte differentiation model.</text>
</comment>
<comment type="disease" evidence="2 3 4 5 6 7 8 9 10 11 12">
    <disease id="DI-03284">
        <name>Neurodegeneration with brain iron accumulation 4</name>
        <acronym>NBIA4</acronym>
        <description>A neurodegenerative disorder associated with iron accumulation in the brain, primarily in the basal ganglia. NBIA4 results in speech difficulty, extrapyramidal signs, oromandibular and generalized dystonia, and parkinsonism. Most patients have progressive involvement of the corticospinal tract, with spasticity, hyperreflexia, and extensor plantar responses.</description>
        <dbReference type="MIM" id="614298"/>
    </disease>
    <text>The disease is caused by variants affecting the gene represented in this entry.</text>
</comment>
<comment type="disease" evidence="9">
    <disease id="DI-03971">
        <name>Spastic paraplegia 43, autosomal recessive</name>
        <acronym>SPG43</acronym>
        <description>A form of spastic paraplegia, a neurodegenerative disorder characterized by a slow, gradual, progressive weakness and spasticity of the lower limbs. Rate of progression and the severity of symptoms are quite variable. Initial symptoms may include difficulty with balance, weakness and stiffness in the legs, muscle spasms, and dragging the toes when walking. In some forms of the disorder, bladder symptoms (such as incontinence) may appear, or the weakness and stiffness may spread to other parts of the body. SP43 is characterized by childhood onset of progressive spasticity affecting the lower and upper limbs.</description>
        <dbReference type="MIM" id="615043"/>
    </disease>
    <text>The disease is caused by variants affecting the gene represented in this entry.</text>
</comment>
<comment type="similarity">
    <text evidence="13">Belongs to the C19orf12 family.</text>
</comment>
<comment type="sequence caution" evidence="13">
    <conflict type="erroneous initiation">
        <sequence resource="EMBL-CDS" id="AAH17211"/>
    </conflict>
    <text>Extended N-terminus.</text>
</comment>
<feature type="chain" id="PRO_0000296662" description="Protein C19orf12">
    <location>
        <begin position="1"/>
        <end position="141"/>
    </location>
</feature>
<feature type="transmembrane region" description="Helical" evidence="1">
    <location>
        <begin position="40"/>
        <end position="60"/>
    </location>
</feature>
<feature type="splice variant" id="VSP_062332" description="In isoform 2.">
    <location>
        <begin position="1"/>
        <end position="64"/>
    </location>
</feature>
<feature type="splice variant" id="VSP_062333" description="In isoform 4.">
    <original>M</original>
    <variation>MERLKSHKPATM</variation>
    <location>
        <position position="1"/>
    </location>
</feature>
<feature type="splice variant" id="VSP_062334" description="In isoform 3.">
    <original>HLEWTDAVQL</original>
    <variation>PCSSSCWPCW</variation>
    <location>
        <begin position="98"/>
        <end position="107"/>
    </location>
</feature>
<feature type="splice variant" id="VSP_062335" description="In isoform 3.">
    <location>
        <begin position="108"/>
        <end position="141"/>
    </location>
</feature>
<feature type="sequence variant" id="VAR_069756" description="In NBIA4; dbSNP:rs1204865094." evidence="6">
    <original>S</original>
    <variation>F</variation>
    <location>
        <position position="28"/>
    </location>
</feature>
<feature type="sequence variant" id="VAR_069757" description="In NBIA4." evidence="6">
    <original>A</original>
    <variation>P</variation>
    <location>
        <position position="37"/>
    </location>
</feature>
<feature type="sequence variant" id="VAR_066618" description="In NBIA4; dbSNP:rs200133991." evidence="2 6">
    <original>G</original>
    <variation>R</variation>
    <location>
        <position position="42"/>
    </location>
</feature>
<feature type="sequence variant" id="VAR_076803" description="In NBIA4; predominantly cytosolic distribution with a localization also seen in the mitochondrial matrix; no cytosolic redistribution seen in response to oxidative stress; patient fibroblasts accumulate high levels of mitochondrial calcium and are more prone to oxidative stress-induced apoptosis; dbSNP:rs1358503478." evidence="5 11">
    <original>G</original>
    <variation>S</variation>
    <location>
        <position position="47"/>
    </location>
</feature>
<feature type="sequence variant" id="VAR_069758" description="In NBIA4; dbSNP:rs1424999393." evidence="6">
    <original>P</original>
    <variation>L</variation>
    <location>
        <position position="49"/>
    </location>
</feature>
<feature type="sequence variant" id="VAR_070668" description="In NBIA4 and SPG43; impairs subcellular localization to the endoplasmic reticulum or mitochondrion; dbSNP:rs376103979." evidence="9">
    <original>A</original>
    <variation>P</variation>
    <location>
        <position position="52"/>
    </location>
</feature>
<feature type="sequence variant" id="VAR_066619" description="In NBIA4; dbSNP:rs752450983." evidence="2 6">
    <original>G</original>
    <variation>E</variation>
    <location>
        <position position="54"/>
    </location>
</feature>
<feature type="sequence variant" id="VAR_069759" description="In NBIA4; dbSNP:rs752450983." evidence="6">
    <original>G</original>
    <variation>V</variation>
    <location>
        <position position="54"/>
    </location>
</feature>
<feature type="sequence variant" id="VAR_070669" description="In NBIA4; impairs subcellular localization to the endoplasmic reticulum or mitochondrion." evidence="4 9">
    <location>
        <position position="55"/>
    </location>
</feature>
<feature type="sequence variant" id="VAR_066620" description="In NBIA4; impairs subcellular localization to the endoplasmic reticulum or mitochondrion; dbSNP:rs515726205." evidence="2 6 9 10">
    <original>G</original>
    <variation>R</variation>
    <location>
        <position position="58"/>
    </location>
</feature>
<feature type="sequence variant" id="VAR_069760" description="In NBIA4; dbSNP:rs201987973." evidence="6 12">
    <original>P</original>
    <variation>L</variation>
    <location>
        <position position="72"/>
    </location>
</feature>
<feature type="sequence variant" id="VAR_076804" description="In NBIA4; no effect on its subcellular localization; no cytosolic redistribution seen in response to oxidative stress." evidence="5 11">
    <original>Q</original>
    <variation>P</variation>
    <location>
        <position position="85"/>
    </location>
</feature>
<feature type="sequence variant" id="VAR_069761" description="In NBIA4; dbSNP:rs1384930997." evidence="6">
    <original>R</original>
    <variation>S</variation>
    <location>
        <position position="87"/>
    </location>
</feature>
<feature type="sequence variant" id="VAR_069762" description="In NBIA4." evidence="3">
    <original>L</original>
    <variation>Q</variation>
    <location>
        <position position="110"/>
    </location>
</feature>
<feature type="sequence variant" id="VAR_069763" description="In NBIA4; uncertain significance; dbSNP:rs1264612218." evidence="6">
    <original>A</original>
    <variation>P</variation>
    <location>
        <position position="123"/>
    </location>
</feature>
<feature type="sequence variant" id="VAR_066621" description="Found in families with neurodegeneration with brain iron accumulation; uncertain significance; dbSNP:rs146170087." evidence="2 6">
    <original>K</original>
    <variation>E</variation>
    <location>
        <position position="131"/>
    </location>
</feature>
<feature type="sequence variant" id="VAR_066622" description="In dbSNP:rs79915936." evidence="2 6">
    <original>K</original>
    <variation>T</variation>
    <location>
        <position position="131"/>
    </location>
</feature>
<feature type="sequence variant" id="VAR_069764" description="In dbSNP:rs73023451." evidence="6">
    <original>Q</original>
    <variation>R</variation>
    <location>
        <position position="138"/>
    </location>
</feature>
<feature type="sequence variant" id="VAR_089160" description="In NBIA4; dbSNP:rs397514477." evidence="2 4 7 10">
    <original>T</original>
    <variation>M</variation>
    <location sequence="Q9NSK7-1">
        <position position="11"/>
    </location>
</feature>
<name>CS012_HUMAN</name>
<protein>
    <recommendedName>
        <fullName>Protein C19orf12</fullName>
    </recommendedName>
</protein>
<organism>
    <name type="scientific">Homo sapiens</name>
    <name type="common">Human</name>
    <dbReference type="NCBI Taxonomy" id="9606"/>
    <lineage>
        <taxon>Eukaryota</taxon>
        <taxon>Metazoa</taxon>
        <taxon>Chordata</taxon>
        <taxon>Craniata</taxon>
        <taxon>Vertebrata</taxon>
        <taxon>Euteleostomi</taxon>
        <taxon>Mammalia</taxon>
        <taxon>Eutheria</taxon>
        <taxon>Euarchontoglires</taxon>
        <taxon>Primates</taxon>
        <taxon>Haplorrhini</taxon>
        <taxon>Catarrhini</taxon>
        <taxon>Hominidae</taxon>
        <taxon>Homo</taxon>
    </lineage>
</organism>
<sequence>MTIMVEDIMKLLCSLSGERKMKAAVKHSGKGALVTGAMAFVGGLVGGPPGLAVGGAVGGLLGAWMTSGQFKPVPQILMELPPAEQQRLFNEAAAIIRHLEWTDAVQLTALVMGSEALQQQLLAMLVNYVTKELRAEIQYDD</sequence>
<gene>
    <name type="primary">C19orf12</name>
</gene>
<reference evidence="19" key="1">
    <citation type="journal article" date="2004" name="Nat. Genet.">
        <title>Complete sequencing and characterization of 21,243 full-length human cDNAs.</title>
        <authorList>
            <person name="Ota T."/>
            <person name="Suzuki Y."/>
            <person name="Nishikawa T."/>
            <person name="Otsuki T."/>
            <person name="Sugiyama T."/>
            <person name="Irie R."/>
            <person name="Wakamatsu A."/>
            <person name="Hayashi K."/>
            <person name="Sato H."/>
            <person name="Nagai K."/>
            <person name="Kimura K."/>
            <person name="Makita H."/>
            <person name="Sekine M."/>
            <person name="Obayashi M."/>
            <person name="Nishi T."/>
            <person name="Shibahara T."/>
            <person name="Tanaka T."/>
            <person name="Ishii S."/>
            <person name="Yamamoto J."/>
            <person name="Saito K."/>
            <person name="Kawai Y."/>
            <person name="Isono Y."/>
            <person name="Nakamura Y."/>
            <person name="Nagahari K."/>
            <person name="Murakami K."/>
            <person name="Yasuda T."/>
            <person name="Iwayanagi T."/>
            <person name="Wagatsuma M."/>
            <person name="Shiratori A."/>
            <person name="Sudo H."/>
            <person name="Hosoiri T."/>
            <person name="Kaku Y."/>
            <person name="Kodaira H."/>
            <person name="Kondo H."/>
            <person name="Sugawara M."/>
            <person name="Takahashi M."/>
            <person name="Kanda K."/>
            <person name="Yokoi T."/>
            <person name="Furuya T."/>
            <person name="Kikkawa E."/>
            <person name="Omura Y."/>
            <person name="Abe K."/>
            <person name="Kamihara K."/>
            <person name="Katsuta N."/>
            <person name="Sato K."/>
            <person name="Tanikawa M."/>
            <person name="Yamazaki M."/>
            <person name="Ninomiya K."/>
            <person name="Ishibashi T."/>
            <person name="Yamashita H."/>
            <person name="Murakawa K."/>
            <person name="Fujimori K."/>
            <person name="Tanai H."/>
            <person name="Kimata M."/>
            <person name="Watanabe M."/>
            <person name="Hiraoka S."/>
            <person name="Chiba Y."/>
            <person name="Ishida S."/>
            <person name="Ono Y."/>
            <person name="Takiguchi S."/>
            <person name="Watanabe S."/>
            <person name="Yosida M."/>
            <person name="Hotuta T."/>
            <person name="Kusano J."/>
            <person name="Kanehori K."/>
            <person name="Takahashi-Fujii A."/>
            <person name="Hara H."/>
            <person name="Tanase T.-O."/>
            <person name="Nomura Y."/>
            <person name="Togiya S."/>
            <person name="Komai F."/>
            <person name="Hara R."/>
            <person name="Takeuchi K."/>
            <person name="Arita M."/>
            <person name="Imose N."/>
            <person name="Musashino K."/>
            <person name="Yuuki H."/>
            <person name="Oshima A."/>
            <person name="Sasaki N."/>
            <person name="Aotsuka S."/>
            <person name="Yoshikawa Y."/>
            <person name="Matsunawa H."/>
            <person name="Ichihara T."/>
            <person name="Shiohata N."/>
            <person name="Sano S."/>
            <person name="Moriya S."/>
            <person name="Momiyama H."/>
            <person name="Satoh N."/>
            <person name="Takami S."/>
            <person name="Terashima Y."/>
            <person name="Suzuki O."/>
            <person name="Nakagawa S."/>
            <person name="Senoh A."/>
            <person name="Mizoguchi H."/>
            <person name="Goto Y."/>
            <person name="Shimizu F."/>
            <person name="Wakebe H."/>
            <person name="Hishigaki H."/>
            <person name="Watanabe T."/>
            <person name="Sugiyama A."/>
            <person name="Takemoto M."/>
            <person name="Kawakami B."/>
            <person name="Yamazaki M."/>
            <person name="Watanabe K."/>
            <person name="Kumagai A."/>
            <person name="Itakura S."/>
            <person name="Fukuzumi Y."/>
            <person name="Fujimori Y."/>
            <person name="Komiyama M."/>
            <person name="Tashiro H."/>
            <person name="Tanigami A."/>
            <person name="Fujiwara T."/>
            <person name="Ono T."/>
            <person name="Yamada K."/>
            <person name="Fujii Y."/>
            <person name="Ozaki K."/>
            <person name="Hirao M."/>
            <person name="Ohmori Y."/>
            <person name="Kawabata A."/>
            <person name="Hikiji T."/>
            <person name="Kobatake N."/>
            <person name="Inagaki H."/>
            <person name="Ikema Y."/>
            <person name="Okamoto S."/>
            <person name="Okitani R."/>
            <person name="Kawakami T."/>
            <person name="Noguchi S."/>
            <person name="Itoh T."/>
            <person name="Shigeta K."/>
            <person name="Senba T."/>
            <person name="Matsumura K."/>
            <person name="Nakajima Y."/>
            <person name="Mizuno T."/>
            <person name="Morinaga M."/>
            <person name="Sasaki M."/>
            <person name="Togashi T."/>
            <person name="Oyama M."/>
            <person name="Hata H."/>
            <person name="Watanabe M."/>
            <person name="Komatsu T."/>
            <person name="Mizushima-Sugano J."/>
            <person name="Satoh T."/>
            <person name="Shirai Y."/>
            <person name="Takahashi Y."/>
            <person name="Nakagawa K."/>
            <person name="Okumura K."/>
            <person name="Nagase T."/>
            <person name="Nomura N."/>
            <person name="Kikuchi H."/>
            <person name="Masuho Y."/>
            <person name="Yamashita R."/>
            <person name="Nakai K."/>
            <person name="Yada T."/>
            <person name="Nakamura Y."/>
            <person name="Ohara O."/>
            <person name="Isogai T."/>
            <person name="Sugano S."/>
        </authorList>
    </citation>
    <scope>NUCLEOTIDE SEQUENCE [LARGE SCALE MRNA] (ISOFORM 1)</scope>
    <source>
        <tissue>Stomach</tissue>
        <tissue>Teratocarcinoma</tissue>
    </source>
</reference>
<reference evidence="18" key="2">
    <citation type="journal article" date="2004" name="Nature">
        <title>The DNA sequence and biology of human chromosome 19.</title>
        <authorList>
            <person name="Grimwood J."/>
            <person name="Gordon L.A."/>
            <person name="Olsen A.S."/>
            <person name="Terry A."/>
            <person name="Schmutz J."/>
            <person name="Lamerdin J.E."/>
            <person name="Hellsten U."/>
            <person name="Goodstein D."/>
            <person name="Couronne O."/>
            <person name="Tran-Gyamfi M."/>
            <person name="Aerts A."/>
            <person name="Altherr M."/>
            <person name="Ashworth L."/>
            <person name="Bajorek E."/>
            <person name="Black S."/>
            <person name="Branscomb E."/>
            <person name="Caenepeel S."/>
            <person name="Carrano A.V."/>
            <person name="Caoile C."/>
            <person name="Chan Y.M."/>
            <person name="Christensen M."/>
            <person name="Cleland C.A."/>
            <person name="Copeland A."/>
            <person name="Dalin E."/>
            <person name="Dehal P."/>
            <person name="Denys M."/>
            <person name="Detter J.C."/>
            <person name="Escobar J."/>
            <person name="Flowers D."/>
            <person name="Fotopulos D."/>
            <person name="Garcia C."/>
            <person name="Georgescu A.M."/>
            <person name="Glavina T."/>
            <person name="Gomez M."/>
            <person name="Gonzales E."/>
            <person name="Groza M."/>
            <person name="Hammon N."/>
            <person name="Hawkins T."/>
            <person name="Haydu L."/>
            <person name="Ho I."/>
            <person name="Huang W."/>
            <person name="Israni S."/>
            <person name="Jett J."/>
            <person name="Kadner K."/>
            <person name="Kimball H."/>
            <person name="Kobayashi A."/>
            <person name="Larionov V."/>
            <person name="Leem S.-H."/>
            <person name="Lopez F."/>
            <person name="Lou Y."/>
            <person name="Lowry S."/>
            <person name="Malfatti S."/>
            <person name="Martinez D."/>
            <person name="McCready P.M."/>
            <person name="Medina C."/>
            <person name="Morgan J."/>
            <person name="Nelson K."/>
            <person name="Nolan M."/>
            <person name="Ovcharenko I."/>
            <person name="Pitluck S."/>
            <person name="Pollard M."/>
            <person name="Popkie A.P."/>
            <person name="Predki P."/>
            <person name="Quan G."/>
            <person name="Ramirez L."/>
            <person name="Rash S."/>
            <person name="Retterer J."/>
            <person name="Rodriguez A."/>
            <person name="Rogers S."/>
            <person name="Salamov A."/>
            <person name="Salazar A."/>
            <person name="She X."/>
            <person name="Smith D."/>
            <person name="Slezak T."/>
            <person name="Solovyev V."/>
            <person name="Thayer N."/>
            <person name="Tice H."/>
            <person name="Tsai M."/>
            <person name="Ustaszewska A."/>
            <person name="Vo N."/>
            <person name="Wagner M."/>
            <person name="Wheeler J."/>
            <person name="Wu K."/>
            <person name="Xie G."/>
            <person name="Yang J."/>
            <person name="Dubchak I."/>
            <person name="Furey T.S."/>
            <person name="DeJong P."/>
            <person name="Dickson M."/>
            <person name="Gordon D."/>
            <person name="Eichler E.E."/>
            <person name="Pennacchio L.A."/>
            <person name="Richardson P."/>
            <person name="Stubbs L."/>
            <person name="Rokhsar D.S."/>
            <person name="Myers R.M."/>
            <person name="Rubin E.M."/>
            <person name="Lucas S.M."/>
        </authorList>
    </citation>
    <scope>NUCLEOTIDE SEQUENCE [LARGE SCALE GENOMIC DNA]</scope>
</reference>
<reference evidence="14 15 16 17" key="3">
    <citation type="journal article" date="2004" name="Genome Res.">
        <title>The status, quality, and expansion of the NIH full-length cDNA project: the Mammalian Gene Collection (MGC).</title>
        <authorList>
            <consortium name="The MGC Project Team"/>
        </authorList>
    </citation>
    <scope>NUCLEOTIDE SEQUENCE [LARGE SCALE MRNA] (ISOFORMS 2 AND 3)</scope>
    <source>
        <tissue>Brain</tissue>
        <tissue>Lymph</tissue>
        <tissue>Ovary</tissue>
    </source>
</reference>
<reference evidence="20" key="4">
    <citation type="journal article" date="2007" name="BMC Genomics">
        <title>The full-ORF clone resource of the German cDNA consortium.</title>
        <authorList>
            <person name="Bechtel S."/>
            <person name="Rosenfelder H."/>
            <person name="Duda A."/>
            <person name="Schmidt C.P."/>
            <person name="Ernst U."/>
            <person name="Wellenreuther R."/>
            <person name="Mehrle A."/>
            <person name="Schuster C."/>
            <person name="Bahr A."/>
            <person name="Bloecker H."/>
            <person name="Heubner D."/>
            <person name="Hoerlein A."/>
            <person name="Michel G."/>
            <person name="Wedler H."/>
            <person name="Koehrer K."/>
            <person name="Ottenwaelder B."/>
            <person name="Poustka A."/>
            <person name="Wiemann S."/>
            <person name="Schupp I."/>
        </authorList>
    </citation>
    <scope>NUCLEOTIDE SEQUENCE [LARGE SCALE MRNA] OF 23-130 (ISOFORMS 1/2)</scope>
    <source>
        <tissue>Melanoma</tissue>
    </source>
</reference>
<reference key="5">
    <citation type="journal article" date="2014" name="Clin. Genet.">
        <title>A novel frameshift mutation of C19ORF12 causes NBIA4 with cerebellar atrophy and manifests with severe peripheral motor axonal neuropathy.</title>
        <authorList>
            <person name="Schottmann G."/>
            <person name="Stenzel W."/>
            <person name="Lutzkendorf S."/>
            <person name="Schuelke M."/>
            <person name="Knierim E."/>
        </authorList>
    </citation>
    <scope>INVOLVEMENT IN NBIA4</scope>
</reference>
<reference key="6">
    <citation type="journal article" date="2011" name="Am. J. Hum. Genet.">
        <title>Absence of an orphan mitochondrial protein, c19orf12, causes a distinct clinical subtype of neurodegeneration with brain iron accumulation.</title>
        <authorList>
            <person name="Hartig M.B."/>
            <person name="Iuso A."/>
            <person name="Haack T."/>
            <person name="Kmiec T."/>
            <person name="Jurkiewicz E."/>
            <person name="Heim K."/>
            <person name="Roeber S."/>
            <person name="Tarabin V."/>
            <person name="Dusi S."/>
            <person name="Krajewska-Walasek M."/>
            <person name="Jozwiak S."/>
            <person name="Hempel M."/>
            <person name="Winkelmann J."/>
            <person name="Elstner M."/>
            <person name="Oexle K."/>
            <person name="Klopstock T."/>
            <person name="Mueller-Felber W."/>
            <person name="Gasser T."/>
            <person name="Trenkwalder C."/>
            <person name="Tiranti V."/>
            <person name="Kretzschmar H."/>
            <person name="Schmitz G."/>
            <person name="Strom T.M."/>
            <person name="Meitinger T."/>
            <person name="Prokisch H."/>
        </authorList>
    </citation>
    <scope>VARIANTS NBIA4 ARG-42; GLU-54 AND ARG-58</scope>
    <scope>VARIANT NBIA4 MET-11 (ISOFORM 4)</scope>
    <scope>VARIANTS GLU-131 AND THR-131</scope>
    <scope>SUBCELLULAR LOCATION</scope>
    <scope>INDUCTION</scope>
</reference>
<reference key="7">
    <citation type="journal article" date="2012" name="J. Neurol.">
        <title>C19orf12 mutations in neurodegeneration with brain iron accumulation mimicking juvenile amyotrophic lateral sclerosis.</title>
        <authorList>
            <person name="Deschauer M."/>
            <person name="Gaul C."/>
            <person name="Behrmann C."/>
            <person name="Prokisch H."/>
            <person name="Zierz S."/>
            <person name="Haack T.B."/>
        </authorList>
    </citation>
    <scope>VARIANT NBIA4 GLY-55 DEL</scope>
    <scope>VARIANT NBIA4 MET-11 (ISOFORM 4)</scope>
</reference>
<reference key="8">
    <citation type="journal article" date="2012" name="Mov. Disord.">
        <title>A new phenotype of brain iron accumulation with dystonia, optic atrophy, and peripheral neuropathy.</title>
        <authorList>
            <person name="Horvath R."/>
            <person name="Holinski-Feder E."/>
            <person name="Neeve V.C."/>
            <person name="Pyle A."/>
            <person name="Griffin H."/>
            <person name="Ashok D."/>
            <person name="Foley C."/>
            <person name="Hudson G."/>
            <person name="Rautenstrauss B."/>
            <person name="Nurnberg G."/>
            <person name="Nurnberg P."/>
            <person name="Kortler J."/>
            <person name="Neitzel B."/>
            <person name="Bassmann I."/>
            <person name="Rahman T."/>
            <person name="Keavney B."/>
            <person name="Loughlin J."/>
            <person name="Hambleton S."/>
            <person name="Schoser B."/>
            <person name="Lochmuller H."/>
            <person name="Santibanez-Koref M."/>
            <person name="Chinnery P.F."/>
        </authorList>
    </citation>
    <scope>VARIANT NBIA4 GLN-110</scope>
</reference>
<reference key="9">
    <citation type="journal article" date="2012" name="Semin. Pediatr. Neurol.">
        <title>C19orf12 and FA2H mutations are rare in Italian patients with neurodegeneration with brain iron accumulation.</title>
        <authorList>
            <person name="Panteghini C."/>
            <person name="Zorzi G."/>
            <person name="Venco P."/>
            <person name="Dusi S."/>
            <person name="Reale C."/>
            <person name="Brunetti D."/>
            <person name="Chiapparini L."/>
            <person name="Zibordi F."/>
            <person name="Siegel B."/>
            <person name="Siegel B."/>
            <person name="Garavaglia B."/>
            <person name="Simonati A."/>
            <person name="Bertini E."/>
            <person name="Nardocci N."/>
            <person name="Tiranti V."/>
        </authorList>
    </citation>
    <scope>VARIANTS NBIA4 SER-47 AND PRO-85</scope>
</reference>
<reference key="10">
    <citation type="journal article" date="2013" name="Clin. Genet.">
        <title>Rapid disease progression in adult-onset mitochondrial membrane protein-associated neurodegeneration.</title>
        <authorList>
            <person name="Dogu O."/>
            <person name="Krebs C.E."/>
            <person name="Kaleagasi H."/>
            <person name="Demirtas Z."/>
            <person name="Oksuz N."/>
            <person name="Walker R.H."/>
            <person name="Paisan-Ruiz C."/>
        </authorList>
    </citation>
    <scope>VARIANT NBIA4 MET-11 (ISOFORM 4)</scope>
</reference>
<reference key="11">
    <citation type="journal article" date="2013" name="Neurology">
        <title>New NBIA subtype: genetic, clinical, pathologic, and radiographic features of MPAN.</title>
        <authorList>
            <person name="Hogarth P."/>
            <person name="Gregory A."/>
            <person name="Kruer M.C."/>
            <person name="Sanford L."/>
            <person name="Wagoner W."/>
            <person name="Natowicz M.R."/>
            <person name="Egel R.T."/>
            <person name="Subramony S.H."/>
            <person name="Goldman J.G."/>
            <person name="Berry-Kravis E."/>
            <person name="Foulds N.C."/>
            <person name="Hammans S.R."/>
            <person name="Desguerre I."/>
            <person name="Rodriguez D."/>
            <person name="Wilson C."/>
            <person name="Diedrich A."/>
            <person name="Green S."/>
            <person name="Tran H."/>
            <person name="Reese L."/>
            <person name="Woltjer R.L."/>
            <person name="Hayflick S.J."/>
        </authorList>
    </citation>
    <scope>VARIANTS NBIA4 PHE-28; PRO-37; ARG-42; LEU-49; GLU-54; VAL-54; ARG-58; LEU-72; SER-87 AND PRO-123</scope>
    <scope>VARIANTS GLU-131; THR-131 AND ARG-138</scope>
</reference>
<reference key="12">
    <citation type="journal article" date="2013" name="Hum. Mutat.">
        <title>Hereditary spastic paraplegia type 43 (SPG43) is caused by mutation in C19orf12.</title>
        <authorList>
            <person name="Landoure G."/>
            <person name="Zhu P.P."/>
            <person name="Lourenco C.M."/>
            <person name="Johnson J.O."/>
            <person name="Toro C."/>
            <person name="Bricceno K.V."/>
            <person name="Rinaldi C."/>
            <person name="Meilleur K.G."/>
            <person name="Sangare M."/>
            <person name="Diallo O."/>
            <person name="Pierson T.M."/>
            <person name="Ishiura H."/>
            <person name="Tsuji S."/>
            <person name="Hein N."/>
            <person name="Fink J.K."/>
            <person name="Stoll M."/>
            <person name="Nicholson G."/>
            <person name="Gonzalez M.A."/>
            <person name="Speziani F."/>
            <person name="Durr A."/>
            <person name="Stevanin G."/>
            <person name="Biesecker L.G."/>
            <person name="Accardi J."/>
            <person name="Landis D.M."/>
            <person name="Gahl W.A."/>
            <person name="Traynor B.J."/>
            <person name="Marques W. Jr."/>
            <person name="Zuchner S."/>
            <person name="Blackstone C."/>
            <person name="Fischbeck K.H."/>
            <person name="Burnett B.G."/>
        </authorList>
    </citation>
    <scope>VARIANT SPG43 PRO-52</scope>
    <scope>VARIANTS NBIA4 PRO-52 AND GLY-55 DEL</scope>
    <scope>SUBCELLULAR LOCATION</scope>
    <scope>CHARACTERIZATION OF VARIANTS SPG43 PRO-52</scope>
    <scope>CHARACTERIZATION OF VARIANTS NBIA4 PRO-52; GLY-55 DEL AND ARG-58</scope>
</reference>
<reference key="13">
    <citation type="journal article" date="2015" name="Front. Genet.">
        <title>Mutations of C19orf12, coding for a transmembrane glycine zipper containing mitochondrial protein, cause mis-localization of the protein, inability to respond to oxidative stress and increased mitochondrial Ca(2)(+).</title>
        <authorList>
            <person name="Venco P."/>
            <person name="Bonora M."/>
            <person name="Giorgi C."/>
            <person name="Papaleo E."/>
            <person name="Iuso A."/>
            <person name="Prokisch H."/>
            <person name="Pinton P."/>
            <person name="Tiranti V."/>
        </authorList>
    </citation>
    <scope>CHARACTERIZATION OF VARIANTS NBIA4 SER-47 AND PRO-85</scope>
    <scope>SUBCELLULAR LOCATION</scope>
</reference>
<reference key="14">
    <citation type="journal article" date="2015" name="J. Neurol. Sci.">
        <title>Analysis of the C19orf12 and WDR45 genes in patients with neurodegeneration with brain iron accumulation.</title>
        <authorList>
            <person name="Tschentscher A."/>
            <person name="Dekomien G."/>
            <person name="Ross S."/>
            <person name="Cremer K."/>
            <person name="Kukuk G.M."/>
            <person name="Epplen J.T."/>
            <person name="Hoffjan S."/>
        </authorList>
    </citation>
    <scope>VARIANT NBIA4 ARG-58</scope>
    <scope>VARIANT NBIA4 MET-11 (ISOFORM 4)</scope>
</reference>
<reference key="15">
    <citation type="journal article" date="2015" name="J. Neurol. Sci.">
        <title>Behr syndrome with homozygous C19ORF12 mutation.</title>
        <authorList>
            <person name="Kleffner I."/>
            <person name="Wessling C."/>
            <person name="Gess B."/>
            <person name="Korsukewitz C."/>
            <person name="Allkemper T."/>
            <person name="Schirmacher A."/>
            <person name="Young P."/>
            <person name="Senderek J."/>
            <person name="Husstedt I.W."/>
        </authorList>
    </citation>
    <scope>VARIANT NBIA4 LEU-72</scope>
</reference>
<dbReference type="EMBL" id="AK057185">
    <property type="protein sequence ID" value="BAG51878.1"/>
    <property type="molecule type" value="mRNA"/>
</dbReference>
<dbReference type="EMBL" id="DA708831">
    <property type="status" value="NOT_ANNOTATED_CDS"/>
    <property type="molecule type" value="mRNA"/>
</dbReference>
<dbReference type="EMBL" id="AC010513">
    <property type="status" value="NOT_ANNOTATED_CDS"/>
    <property type="molecule type" value="Genomic_DNA"/>
</dbReference>
<dbReference type="EMBL" id="BC004957">
    <property type="protein sequence ID" value="AAH04957.1"/>
    <property type="molecule type" value="mRNA"/>
</dbReference>
<dbReference type="EMBL" id="BC009946">
    <property type="protein sequence ID" value="AAH09946.1"/>
    <property type="molecule type" value="mRNA"/>
</dbReference>
<dbReference type="EMBL" id="BC017211">
    <property type="protein sequence ID" value="AAH17211.2"/>
    <property type="status" value="ALT_INIT"/>
    <property type="molecule type" value="mRNA"/>
</dbReference>
<dbReference type="EMBL" id="BC063518">
    <property type="protein sequence ID" value="AAH63518.1"/>
    <property type="molecule type" value="mRNA"/>
</dbReference>
<dbReference type="EMBL" id="AL162066">
    <property type="protein sequence ID" value="CAB82403.1"/>
    <property type="molecule type" value="mRNA"/>
</dbReference>
<dbReference type="CCDS" id="CCDS12418.2">
    <molecule id="Q9NSK7-4"/>
</dbReference>
<dbReference type="CCDS" id="CCDS59373.1">
    <molecule id="Q9NSK7-3"/>
</dbReference>
<dbReference type="CCDS" id="CCDS74325.1">
    <molecule id="Q9NSK7-2"/>
</dbReference>
<dbReference type="PIR" id="T47169">
    <property type="entry name" value="T47169"/>
</dbReference>
<dbReference type="RefSeq" id="NP_001026896.3">
    <molecule id="Q9NSK7-4"/>
    <property type="nucleotide sequence ID" value="NM_001031726.4"/>
</dbReference>
<dbReference type="RefSeq" id="NP_001242975.1">
    <molecule id="Q9NSK7-3"/>
    <property type="nucleotide sequence ID" value="NM_001256046.3"/>
</dbReference>
<dbReference type="RefSeq" id="NP_001242976.1">
    <molecule id="Q9NSK7-4"/>
    <property type="nucleotide sequence ID" value="NM_001256047.2"/>
</dbReference>
<dbReference type="RefSeq" id="NP_001269858.1">
    <molecule id="Q9NSK7-2"/>
    <property type="nucleotide sequence ID" value="NM_001282929.1"/>
</dbReference>
<dbReference type="RefSeq" id="NP_001269859.1">
    <molecule id="Q9NSK7-2"/>
    <property type="nucleotide sequence ID" value="NM_001282930.3"/>
</dbReference>
<dbReference type="RefSeq" id="NP_001269860.1">
    <molecule id="Q9NSK7-2"/>
    <property type="nucleotide sequence ID" value="NM_001282931.3"/>
</dbReference>
<dbReference type="RefSeq" id="NP_113636.2">
    <molecule id="Q9NSK7-4"/>
    <property type="nucleotide sequence ID" value="NM_031448.6"/>
</dbReference>
<dbReference type="RefSeq" id="XP_024307503.1">
    <molecule id="Q9NSK7-4"/>
    <property type="nucleotide sequence ID" value="XM_024451735.2"/>
</dbReference>
<dbReference type="RefSeq" id="XP_047295453.1">
    <molecule id="Q9NSK7-2"/>
    <property type="nucleotide sequence ID" value="XM_047439497.1"/>
</dbReference>
<dbReference type="RefSeq" id="XP_054178270.1">
    <molecule id="Q9NSK7-4"/>
    <property type="nucleotide sequence ID" value="XM_054322295.1"/>
</dbReference>
<dbReference type="RefSeq" id="XP_054178271.1">
    <molecule id="Q9NSK7-2"/>
    <property type="nucleotide sequence ID" value="XM_054322296.1"/>
</dbReference>
<dbReference type="SMR" id="Q9NSK7"/>
<dbReference type="BioGRID" id="123700">
    <property type="interactions" value="2"/>
</dbReference>
<dbReference type="FunCoup" id="Q9NSK7">
    <property type="interactions" value="1030"/>
</dbReference>
<dbReference type="IntAct" id="Q9NSK7">
    <property type="interactions" value="2"/>
</dbReference>
<dbReference type="STRING" id="9606.ENSP00000376103"/>
<dbReference type="iPTMnet" id="Q9NSK7"/>
<dbReference type="PhosphoSitePlus" id="Q9NSK7"/>
<dbReference type="BioMuta" id="C19orf12"/>
<dbReference type="DMDM" id="374095505"/>
<dbReference type="jPOST" id="Q9NSK7"/>
<dbReference type="MassIVE" id="Q9NSK7"/>
<dbReference type="PaxDb" id="9606-ENSP00000376103"/>
<dbReference type="PeptideAtlas" id="Q9NSK7"/>
<dbReference type="ProteomicsDB" id="82566">
    <molecule id="Q9NSK7-1"/>
</dbReference>
<dbReference type="ProteomicsDB" id="82567">
    <molecule id="Q9NSK7-2"/>
</dbReference>
<dbReference type="ProteomicsDB" id="82568">
    <molecule id="Q9NSK7-3"/>
</dbReference>
<dbReference type="ProteomicsDB" id="82569">
    <molecule id="Q9NSK7-4"/>
</dbReference>
<dbReference type="Pumba" id="Q9NSK7"/>
<dbReference type="Antibodypedia" id="47936">
    <property type="antibodies" value="39 antibodies from 14 providers"/>
</dbReference>
<dbReference type="DNASU" id="83636"/>
<dbReference type="Ensembl" id="ENST00000323670.14">
    <molecule id="Q9NSK7-4"/>
    <property type="protein sequence ID" value="ENSP00000313332.9"/>
    <property type="gene ID" value="ENSG00000131943.20"/>
</dbReference>
<dbReference type="Ensembl" id="ENST00000392275.1">
    <molecule id="Q9NSK7-2"/>
    <property type="protein sequence ID" value="ENSP00000507573.1"/>
    <property type="gene ID" value="ENSG00000131943.20"/>
</dbReference>
<dbReference type="Ensembl" id="ENST00000392276.1">
    <molecule id="Q9NSK7-2"/>
    <property type="protein sequence ID" value="ENSP00000376102.1"/>
    <property type="gene ID" value="ENSG00000131943.20"/>
</dbReference>
<dbReference type="Ensembl" id="ENST00000592153.5">
    <molecule id="Q9NSK7-3"/>
    <property type="protein sequence ID" value="ENSP00000467117.1"/>
    <property type="gene ID" value="ENSG00000131943.20"/>
</dbReference>
<dbReference type="Ensembl" id="ENST00000623113.3">
    <molecule id="Q9NSK7-4"/>
    <property type="protein sequence ID" value="ENSP00000485413.2"/>
    <property type="gene ID" value="ENSG00000131943.20"/>
</dbReference>
<dbReference type="GeneID" id="83636"/>
<dbReference type="KEGG" id="hsa:83636"/>
<dbReference type="MANE-Select" id="ENST00000323670.14">
    <property type="protein sequence ID" value="ENSP00000313332.9"/>
    <property type="RefSeq nucleotide sequence ID" value="NM_031448.6"/>
    <property type="RefSeq protein sequence ID" value="NP_113636.2"/>
</dbReference>
<dbReference type="UCSC" id="uc002nsj.4">
    <molecule id="Q9NSK7-4"/>
    <property type="organism name" value="human"/>
</dbReference>
<dbReference type="AGR" id="HGNC:25443"/>
<dbReference type="CTD" id="83636"/>
<dbReference type="DisGeNET" id="83636"/>
<dbReference type="GeneCards" id="C19orf12"/>
<dbReference type="GeneReviews" id="C19orf12"/>
<dbReference type="HGNC" id="HGNC:25443">
    <property type="gene designation" value="C19orf12"/>
</dbReference>
<dbReference type="HPA" id="ENSG00000131943">
    <property type="expression patterns" value="Tissue enhanced (adipose tissue, tongue)"/>
</dbReference>
<dbReference type="MalaCards" id="C19orf12"/>
<dbReference type="MIM" id="614297">
    <property type="type" value="gene"/>
</dbReference>
<dbReference type="MIM" id="614298">
    <property type="type" value="phenotype"/>
</dbReference>
<dbReference type="MIM" id="615043">
    <property type="type" value="phenotype"/>
</dbReference>
<dbReference type="neXtProt" id="NX_Q9NSK7"/>
<dbReference type="OpenTargets" id="ENSG00000131943"/>
<dbReference type="Orphanet" id="320370">
    <property type="disease" value="Autosomal recessive spastic paraplegia type 43"/>
</dbReference>
<dbReference type="Orphanet" id="289560">
    <property type="disease" value="Mitochondrial membrane protein-associated neurodegeneration"/>
</dbReference>
<dbReference type="PharmGKB" id="PA134981038"/>
<dbReference type="VEuPathDB" id="HostDB:ENSG00000131943"/>
<dbReference type="eggNOG" id="ENOG502RZQC">
    <property type="taxonomic scope" value="Eukaryota"/>
</dbReference>
<dbReference type="GeneTree" id="ENSGT00390000009077"/>
<dbReference type="HOGENOM" id="CLU_2460310_0_0_1"/>
<dbReference type="InParanoid" id="Q9NSK7"/>
<dbReference type="OrthoDB" id="5976774at2759"/>
<dbReference type="PAN-GO" id="Q9NSK7">
    <property type="GO annotations" value="0 GO annotations based on evolutionary models"/>
</dbReference>
<dbReference type="PhylomeDB" id="Q9NSK7"/>
<dbReference type="TreeFam" id="TF323308"/>
<dbReference type="PathwayCommons" id="Q9NSK7"/>
<dbReference type="SignaLink" id="Q9NSK7"/>
<dbReference type="BioGRID-ORCS" id="83636">
    <property type="hits" value="24 hits in 1143 CRISPR screens"/>
</dbReference>
<dbReference type="ChiTaRS" id="C19orf12">
    <property type="organism name" value="human"/>
</dbReference>
<dbReference type="GenomeRNAi" id="83636"/>
<dbReference type="Pharos" id="Q9NSK7">
    <property type="development level" value="Tbio"/>
</dbReference>
<dbReference type="PRO" id="PR:Q9NSK7"/>
<dbReference type="Proteomes" id="UP000005640">
    <property type="component" value="Chromosome 19"/>
</dbReference>
<dbReference type="RNAct" id="Q9NSK7">
    <property type="molecule type" value="protein"/>
</dbReference>
<dbReference type="Bgee" id="ENSG00000131943">
    <property type="expression patterns" value="Expressed in endothelial cell and 186 other cell types or tissues"/>
</dbReference>
<dbReference type="ExpressionAtlas" id="Q9NSK7">
    <property type="expression patterns" value="baseline and differential"/>
</dbReference>
<dbReference type="GO" id="GO:0005829">
    <property type="term" value="C:cytosol"/>
    <property type="evidence" value="ECO:0000314"/>
    <property type="project" value="HPA"/>
</dbReference>
<dbReference type="GO" id="GO:0005783">
    <property type="term" value="C:endoplasmic reticulum"/>
    <property type="evidence" value="ECO:0000314"/>
    <property type="project" value="UniProtKB"/>
</dbReference>
<dbReference type="GO" id="GO:0031966">
    <property type="term" value="C:mitochondrial membrane"/>
    <property type="evidence" value="ECO:0000314"/>
    <property type="project" value="UniProtKB"/>
</dbReference>
<dbReference type="GO" id="GO:0005739">
    <property type="term" value="C:mitochondrion"/>
    <property type="evidence" value="ECO:0000314"/>
    <property type="project" value="UniProtKB"/>
</dbReference>
<dbReference type="GO" id="GO:0006915">
    <property type="term" value="P:apoptotic process"/>
    <property type="evidence" value="ECO:0000315"/>
    <property type="project" value="UniProtKB"/>
</dbReference>
<dbReference type="GO" id="GO:0006914">
    <property type="term" value="P:autophagy"/>
    <property type="evidence" value="ECO:0000315"/>
    <property type="project" value="UniProtKB"/>
</dbReference>
<dbReference type="GO" id="GO:0051560">
    <property type="term" value="P:mitochondrial calcium ion homeostasis"/>
    <property type="evidence" value="ECO:0000315"/>
    <property type="project" value="UniProtKB"/>
</dbReference>
<dbReference type="GO" id="GO:0006979">
    <property type="term" value="P:response to oxidative stress"/>
    <property type="evidence" value="ECO:0000315"/>
    <property type="project" value="UniProtKB"/>
</dbReference>
<dbReference type="InterPro" id="IPR033369">
    <property type="entry name" value="C19orf12"/>
</dbReference>
<dbReference type="PANTHER" id="PTHR31493">
    <property type="entry name" value="NAZO FAMILY MEMBER"/>
    <property type="match status" value="1"/>
</dbReference>
<dbReference type="PANTHER" id="PTHR31493:SF1">
    <property type="entry name" value="PROTEIN C19ORF12"/>
    <property type="match status" value="1"/>
</dbReference>
<dbReference type="Pfam" id="PF20721">
    <property type="entry name" value="C19orf12"/>
    <property type="match status" value="1"/>
</dbReference>
<proteinExistence type="evidence at protein level"/>
<keyword id="KW-0025">Alternative splicing</keyword>
<keyword id="KW-0963">Cytoplasm</keyword>
<keyword id="KW-0225">Disease variant</keyword>
<keyword id="KW-0256">Endoplasmic reticulum</keyword>
<keyword id="KW-0890">Hereditary spastic paraplegia</keyword>
<keyword id="KW-0472">Membrane</keyword>
<keyword id="KW-0496">Mitochondrion</keyword>
<keyword id="KW-0523">Neurodegeneration</keyword>
<keyword id="KW-1267">Proteomics identification</keyword>
<keyword id="KW-1185">Reference proteome</keyword>
<keyword id="KW-0812">Transmembrane</keyword>
<keyword id="KW-1133">Transmembrane helix</keyword>
<evidence type="ECO:0000255" key="1"/>
<evidence type="ECO:0000269" key="2">
    <source>
    </source>
</evidence>
<evidence type="ECO:0000269" key="3">
    <source>
    </source>
</evidence>
<evidence type="ECO:0000269" key="4">
    <source>
    </source>
</evidence>
<evidence type="ECO:0000269" key="5">
    <source>
    </source>
</evidence>
<evidence type="ECO:0000269" key="6">
    <source>
    </source>
</evidence>
<evidence type="ECO:0000269" key="7">
    <source>
    </source>
</evidence>
<evidence type="ECO:0000269" key="8">
    <source>
    </source>
</evidence>
<evidence type="ECO:0000269" key="9">
    <source>
    </source>
</evidence>
<evidence type="ECO:0000269" key="10">
    <source>
    </source>
</evidence>
<evidence type="ECO:0000269" key="11">
    <source>
    </source>
</evidence>
<evidence type="ECO:0000269" key="12">
    <source>
    </source>
</evidence>
<evidence type="ECO:0000305" key="13"/>
<evidence type="ECO:0000312" key="14">
    <source>
        <dbReference type="EMBL" id="AAH04957.1"/>
    </source>
</evidence>
<evidence type="ECO:0000312" key="15">
    <source>
        <dbReference type="EMBL" id="AAH09946.1"/>
    </source>
</evidence>
<evidence type="ECO:0000312" key="16">
    <source>
        <dbReference type="EMBL" id="AAH17211.2"/>
    </source>
</evidence>
<evidence type="ECO:0000312" key="17">
    <source>
        <dbReference type="EMBL" id="AAH63518.1"/>
    </source>
</evidence>
<evidence type="ECO:0000312" key="18">
    <source>
        <dbReference type="EMBL" id="AC010513"/>
    </source>
</evidence>
<evidence type="ECO:0000312" key="19">
    <source>
        <dbReference type="EMBL" id="BAG51878.1"/>
    </source>
</evidence>
<evidence type="ECO:0000312" key="20">
    <source>
        <dbReference type="EMBL" id="CAB82403.1"/>
    </source>
</evidence>
<accession>Q9NSK7</accession>
<accession>B3KQ16</accession>
<accession>Q0D2Q0</accession>
<accession>Q6P4C5</accession>
<accession>Q9BSL7</accession>